<evidence type="ECO:0000255" key="1">
    <source>
        <dbReference type="HAMAP-Rule" id="MF_00214"/>
    </source>
</evidence>
<feature type="chain" id="PRO_1000043206" description="3-dehydroquinate dehydratase">
    <location>
        <begin position="1"/>
        <end position="225"/>
    </location>
</feature>
<feature type="active site" description="Proton donor/acceptor" evidence="1">
    <location>
        <position position="118"/>
    </location>
</feature>
<feature type="active site" description="Schiff-base intermediate with substrate" evidence="1">
    <location>
        <position position="143"/>
    </location>
</feature>
<feature type="binding site" evidence="1">
    <location>
        <begin position="30"/>
        <end position="32"/>
    </location>
    <ligand>
        <name>3-dehydroquinate</name>
        <dbReference type="ChEBI" id="CHEBI:32364"/>
    </ligand>
</feature>
<feature type="binding site" evidence="1">
    <location>
        <position position="62"/>
    </location>
    <ligand>
        <name>3-dehydroquinate</name>
        <dbReference type="ChEBI" id="CHEBI:32364"/>
    </ligand>
</feature>
<feature type="binding site" evidence="1">
    <location>
        <position position="186"/>
    </location>
    <ligand>
        <name>3-dehydroquinate</name>
        <dbReference type="ChEBI" id="CHEBI:32364"/>
    </ligand>
</feature>
<feature type="binding site" evidence="1">
    <location>
        <position position="205"/>
    </location>
    <ligand>
        <name>3-dehydroquinate</name>
        <dbReference type="ChEBI" id="CHEBI:32364"/>
    </ligand>
</feature>
<feature type="binding site" evidence="1">
    <location>
        <position position="209"/>
    </location>
    <ligand>
        <name>3-dehydroquinate</name>
        <dbReference type="ChEBI" id="CHEBI:32364"/>
    </ligand>
</feature>
<accession>Q5M558</accession>
<organism>
    <name type="scientific">Streptococcus thermophilus (strain ATCC BAA-250 / LMG 18311)</name>
    <dbReference type="NCBI Taxonomy" id="264199"/>
    <lineage>
        <taxon>Bacteria</taxon>
        <taxon>Bacillati</taxon>
        <taxon>Bacillota</taxon>
        <taxon>Bacilli</taxon>
        <taxon>Lactobacillales</taxon>
        <taxon>Streptococcaceae</taxon>
        <taxon>Streptococcus</taxon>
    </lineage>
</organism>
<name>AROD_STRT2</name>
<comment type="function">
    <text evidence="1">Involved in the third step of the chorismate pathway, which leads to the biosynthesis of aromatic amino acids. Catalyzes the cis-dehydration of 3-dehydroquinate (DHQ) and introduces the first double bond of the aromatic ring to yield 3-dehydroshikimate.</text>
</comment>
<comment type="catalytic activity">
    <reaction evidence="1">
        <text>3-dehydroquinate = 3-dehydroshikimate + H2O</text>
        <dbReference type="Rhea" id="RHEA:21096"/>
        <dbReference type="ChEBI" id="CHEBI:15377"/>
        <dbReference type="ChEBI" id="CHEBI:16630"/>
        <dbReference type="ChEBI" id="CHEBI:32364"/>
        <dbReference type="EC" id="4.2.1.10"/>
    </reaction>
</comment>
<comment type="pathway">
    <text evidence="1">Metabolic intermediate biosynthesis; chorismate biosynthesis; chorismate from D-erythrose 4-phosphate and phosphoenolpyruvate: step 3/7.</text>
</comment>
<comment type="subunit">
    <text evidence="1">Homodimer.</text>
</comment>
<comment type="similarity">
    <text evidence="1">Belongs to the type-I 3-dehydroquinase family.</text>
</comment>
<dbReference type="EC" id="4.2.1.10" evidence="1"/>
<dbReference type="EMBL" id="CP000023">
    <property type="protein sequence ID" value="AAV60344.1"/>
    <property type="molecule type" value="Genomic_DNA"/>
</dbReference>
<dbReference type="RefSeq" id="WP_011225709.1">
    <property type="nucleotide sequence ID" value="NC_006448.1"/>
</dbReference>
<dbReference type="SMR" id="Q5M558"/>
<dbReference type="STRING" id="264199.stu0638"/>
<dbReference type="GeneID" id="66898546"/>
<dbReference type="KEGG" id="stl:stu0638"/>
<dbReference type="PATRIC" id="fig|264199.4.peg.647"/>
<dbReference type="eggNOG" id="COG0710">
    <property type="taxonomic scope" value="Bacteria"/>
</dbReference>
<dbReference type="HOGENOM" id="CLU_064444_0_0_9"/>
<dbReference type="UniPathway" id="UPA00053">
    <property type="reaction ID" value="UER00086"/>
</dbReference>
<dbReference type="Proteomes" id="UP000001170">
    <property type="component" value="Chromosome"/>
</dbReference>
<dbReference type="GO" id="GO:0003855">
    <property type="term" value="F:3-dehydroquinate dehydratase activity"/>
    <property type="evidence" value="ECO:0007669"/>
    <property type="project" value="UniProtKB-UniRule"/>
</dbReference>
<dbReference type="GO" id="GO:0046279">
    <property type="term" value="P:3,4-dihydroxybenzoate biosynthetic process"/>
    <property type="evidence" value="ECO:0007669"/>
    <property type="project" value="TreeGrafter"/>
</dbReference>
<dbReference type="GO" id="GO:0008652">
    <property type="term" value="P:amino acid biosynthetic process"/>
    <property type="evidence" value="ECO:0007669"/>
    <property type="project" value="UniProtKB-KW"/>
</dbReference>
<dbReference type="GO" id="GO:0009073">
    <property type="term" value="P:aromatic amino acid family biosynthetic process"/>
    <property type="evidence" value="ECO:0007669"/>
    <property type="project" value="UniProtKB-KW"/>
</dbReference>
<dbReference type="GO" id="GO:0009423">
    <property type="term" value="P:chorismate biosynthetic process"/>
    <property type="evidence" value="ECO:0007669"/>
    <property type="project" value="UniProtKB-UniRule"/>
</dbReference>
<dbReference type="CDD" id="cd00502">
    <property type="entry name" value="DHQase_I"/>
    <property type="match status" value="1"/>
</dbReference>
<dbReference type="FunFam" id="3.20.20.70:FF:000047">
    <property type="entry name" value="3-dehydroquinate dehydratase"/>
    <property type="match status" value="1"/>
</dbReference>
<dbReference type="Gene3D" id="3.20.20.70">
    <property type="entry name" value="Aldolase class I"/>
    <property type="match status" value="1"/>
</dbReference>
<dbReference type="HAMAP" id="MF_00214">
    <property type="entry name" value="AroD"/>
    <property type="match status" value="1"/>
</dbReference>
<dbReference type="InterPro" id="IPR013785">
    <property type="entry name" value="Aldolase_TIM"/>
</dbReference>
<dbReference type="InterPro" id="IPR001381">
    <property type="entry name" value="DHquinase_I"/>
</dbReference>
<dbReference type="InterPro" id="IPR050146">
    <property type="entry name" value="Type-I_3-dehydroquinase"/>
</dbReference>
<dbReference type="NCBIfam" id="TIGR01093">
    <property type="entry name" value="aroD"/>
    <property type="match status" value="1"/>
</dbReference>
<dbReference type="PANTHER" id="PTHR43699">
    <property type="entry name" value="3-DEHYDROQUINATE DEHYDRATASE"/>
    <property type="match status" value="1"/>
</dbReference>
<dbReference type="PANTHER" id="PTHR43699:SF1">
    <property type="entry name" value="3-DEHYDROQUINATE DEHYDRATASE"/>
    <property type="match status" value="1"/>
</dbReference>
<dbReference type="Pfam" id="PF01487">
    <property type="entry name" value="DHquinase_I"/>
    <property type="match status" value="1"/>
</dbReference>
<dbReference type="SUPFAM" id="SSF51569">
    <property type="entry name" value="Aldolase"/>
    <property type="match status" value="1"/>
</dbReference>
<sequence>MKIVVPIMPTSLEEAQALELSRFEGADIIEWRADFLDKHSILTVAPAIFEKFAGFEIVFTIRTTREGGKIELTDGEYVTLIKDVAAIYSPDYIDFEYFTRKEVFDQMLGFSNLVLSYHNFEETPENLMELLSEMTNLTPRVVKVAVMPKNEQDVLDLMNFTRGFKAFNPEQEFVTMSMGKLGRLSRLAGDLVGSSWTFASLDNTSAPGQVALADMCRIREVLDAD</sequence>
<keyword id="KW-0028">Amino-acid biosynthesis</keyword>
<keyword id="KW-0057">Aromatic amino acid biosynthesis</keyword>
<keyword id="KW-0456">Lyase</keyword>
<keyword id="KW-1185">Reference proteome</keyword>
<keyword id="KW-0704">Schiff base</keyword>
<proteinExistence type="inferred from homology"/>
<protein>
    <recommendedName>
        <fullName evidence="1">3-dehydroquinate dehydratase</fullName>
        <shortName evidence="1">3-dehydroquinase</shortName>
        <ecNumber evidence="1">4.2.1.10</ecNumber>
    </recommendedName>
    <alternativeName>
        <fullName evidence="1">Type I DHQase</fullName>
    </alternativeName>
    <alternativeName>
        <fullName evidence="1">Type I dehydroquinase</fullName>
        <shortName evidence="1">DHQ1</shortName>
    </alternativeName>
</protein>
<gene>
    <name evidence="1" type="primary">aroD</name>
    <name type="ordered locus">stu0638</name>
</gene>
<reference key="1">
    <citation type="journal article" date="2004" name="Nat. Biotechnol.">
        <title>Complete sequence and comparative genome analysis of the dairy bacterium Streptococcus thermophilus.</title>
        <authorList>
            <person name="Bolotin A."/>
            <person name="Quinquis B."/>
            <person name="Renault P."/>
            <person name="Sorokin A."/>
            <person name="Ehrlich S.D."/>
            <person name="Kulakauskas S."/>
            <person name="Lapidus A."/>
            <person name="Goltsman E."/>
            <person name="Mazur M."/>
            <person name="Pusch G.D."/>
            <person name="Fonstein M."/>
            <person name="Overbeek R."/>
            <person name="Kyprides N."/>
            <person name="Purnelle B."/>
            <person name="Prozzi D."/>
            <person name="Ngui K."/>
            <person name="Masuy D."/>
            <person name="Hancy F."/>
            <person name="Burteau S."/>
            <person name="Boutry M."/>
            <person name="Delcour J."/>
            <person name="Goffeau A."/>
            <person name="Hols P."/>
        </authorList>
    </citation>
    <scope>NUCLEOTIDE SEQUENCE [LARGE SCALE GENOMIC DNA]</scope>
    <source>
        <strain>ATCC BAA-250 / LMG 18311</strain>
    </source>
</reference>